<proteinExistence type="inferred from homology"/>
<gene>
    <name type="ordered locus">PFLU_4621</name>
</gene>
<sequence>MKRSAFFISDGTGITAETLGQSLLAQFENITFAKFTRPYIDSVDKARAMVQQINLAAEKDGFRPIIFDTIVNQDIREILATSNGFMIDIFSTFLAPLEQELSEHSSYSVGKSHSIGHNSNYMERIEAVNFALDNDDGARTHYYDKADLILVGVSRCGKTPTCLYMAMQFGIRAANYPLTEDDMEHLTLPAALRAHSHKLFGLTIDPDRLTAIRNERKPNSRYSSYAQCEFEVREVENLFRRENIAHINSTHFSVEEISAKILVEKGVERRFK</sequence>
<name>PSRP_PSEFS</name>
<comment type="function">
    <text evidence="1">Bifunctional serine/threonine kinase and phosphorylase involved in the regulation of the phosphoenolpyruvate synthase (PEPS) by catalyzing its phosphorylation/dephosphorylation.</text>
</comment>
<comment type="catalytic activity">
    <reaction evidence="1">
        <text>[pyruvate, water dikinase] + ADP = [pyruvate, water dikinase]-phosphate + AMP + H(+)</text>
        <dbReference type="Rhea" id="RHEA:46020"/>
        <dbReference type="Rhea" id="RHEA-COMP:11425"/>
        <dbReference type="Rhea" id="RHEA-COMP:11426"/>
        <dbReference type="ChEBI" id="CHEBI:15378"/>
        <dbReference type="ChEBI" id="CHEBI:43176"/>
        <dbReference type="ChEBI" id="CHEBI:68546"/>
        <dbReference type="ChEBI" id="CHEBI:456215"/>
        <dbReference type="ChEBI" id="CHEBI:456216"/>
        <dbReference type="EC" id="2.7.11.33"/>
    </reaction>
</comment>
<comment type="catalytic activity">
    <reaction evidence="1">
        <text>[pyruvate, water dikinase]-phosphate + phosphate + H(+) = [pyruvate, water dikinase] + diphosphate</text>
        <dbReference type="Rhea" id="RHEA:48580"/>
        <dbReference type="Rhea" id="RHEA-COMP:11425"/>
        <dbReference type="Rhea" id="RHEA-COMP:11426"/>
        <dbReference type="ChEBI" id="CHEBI:15378"/>
        <dbReference type="ChEBI" id="CHEBI:33019"/>
        <dbReference type="ChEBI" id="CHEBI:43176"/>
        <dbReference type="ChEBI" id="CHEBI:43474"/>
        <dbReference type="ChEBI" id="CHEBI:68546"/>
        <dbReference type="EC" id="2.7.4.28"/>
    </reaction>
</comment>
<comment type="similarity">
    <text evidence="1">Belongs to the pyruvate, phosphate/water dikinase regulatory protein family. PSRP subfamily.</text>
</comment>
<feature type="chain" id="PRO_1000213455" description="Putative phosphoenolpyruvate synthase regulatory protein">
    <location>
        <begin position="1"/>
        <end position="272"/>
    </location>
</feature>
<feature type="binding site" evidence="1">
    <location>
        <begin position="152"/>
        <end position="159"/>
    </location>
    <ligand>
        <name>ADP</name>
        <dbReference type="ChEBI" id="CHEBI:456216"/>
    </ligand>
</feature>
<evidence type="ECO:0000255" key="1">
    <source>
        <dbReference type="HAMAP-Rule" id="MF_01062"/>
    </source>
</evidence>
<protein>
    <recommendedName>
        <fullName evidence="1">Putative phosphoenolpyruvate synthase regulatory protein</fullName>
        <shortName evidence="1">PEP synthase regulatory protein</shortName>
        <shortName evidence="1">PSRP</shortName>
        <ecNumber evidence="1">2.7.11.33</ecNumber>
        <ecNumber evidence="1">2.7.4.28</ecNumber>
    </recommendedName>
    <alternativeName>
        <fullName evidence="1">Pyruvate, water dikinase regulatory protein</fullName>
    </alternativeName>
</protein>
<accession>C3K116</accession>
<organism>
    <name type="scientific">Pseudomonas fluorescens (strain SBW25)</name>
    <dbReference type="NCBI Taxonomy" id="216595"/>
    <lineage>
        <taxon>Bacteria</taxon>
        <taxon>Pseudomonadati</taxon>
        <taxon>Pseudomonadota</taxon>
        <taxon>Gammaproteobacteria</taxon>
        <taxon>Pseudomonadales</taxon>
        <taxon>Pseudomonadaceae</taxon>
        <taxon>Pseudomonas</taxon>
    </lineage>
</organism>
<keyword id="KW-0418">Kinase</keyword>
<keyword id="KW-0547">Nucleotide-binding</keyword>
<keyword id="KW-0723">Serine/threonine-protein kinase</keyword>
<keyword id="KW-0808">Transferase</keyword>
<dbReference type="EC" id="2.7.11.33" evidence="1"/>
<dbReference type="EC" id="2.7.4.28" evidence="1"/>
<dbReference type="EMBL" id="AM181176">
    <property type="protein sequence ID" value="CAY51378.1"/>
    <property type="molecule type" value="Genomic_DNA"/>
</dbReference>
<dbReference type="RefSeq" id="WP_003193298.1">
    <property type="nucleotide sequence ID" value="NC_012660.1"/>
</dbReference>
<dbReference type="SMR" id="C3K116"/>
<dbReference type="STRING" id="294.SRM1_01858"/>
<dbReference type="eggNOG" id="COG1806">
    <property type="taxonomic scope" value="Bacteria"/>
</dbReference>
<dbReference type="HOGENOM" id="CLU_046206_1_0_6"/>
<dbReference type="OrthoDB" id="9782201at2"/>
<dbReference type="GO" id="GO:0043531">
    <property type="term" value="F:ADP binding"/>
    <property type="evidence" value="ECO:0007669"/>
    <property type="project" value="UniProtKB-UniRule"/>
</dbReference>
<dbReference type="GO" id="GO:0005524">
    <property type="term" value="F:ATP binding"/>
    <property type="evidence" value="ECO:0007669"/>
    <property type="project" value="InterPro"/>
</dbReference>
<dbReference type="GO" id="GO:0016776">
    <property type="term" value="F:phosphotransferase activity, phosphate group as acceptor"/>
    <property type="evidence" value="ECO:0007669"/>
    <property type="project" value="UniProtKB-UniRule"/>
</dbReference>
<dbReference type="GO" id="GO:0004674">
    <property type="term" value="F:protein serine/threonine kinase activity"/>
    <property type="evidence" value="ECO:0007669"/>
    <property type="project" value="UniProtKB-UniRule"/>
</dbReference>
<dbReference type="HAMAP" id="MF_01062">
    <property type="entry name" value="PSRP"/>
    <property type="match status" value="1"/>
</dbReference>
<dbReference type="InterPro" id="IPR005177">
    <property type="entry name" value="Kinase-pyrophosphorylase"/>
</dbReference>
<dbReference type="InterPro" id="IPR026530">
    <property type="entry name" value="PSRP"/>
</dbReference>
<dbReference type="NCBIfam" id="NF003742">
    <property type="entry name" value="PRK05339.1"/>
    <property type="match status" value="1"/>
</dbReference>
<dbReference type="PANTHER" id="PTHR31756">
    <property type="entry name" value="PYRUVATE, PHOSPHATE DIKINASE REGULATORY PROTEIN 1, CHLOROPLASTIC"/>
    <property type="match status" value="1"/>
</dbReference>
<dbReference type="PANTHER" id="PTHR31756:SF3">
    <property type="entry name" value="PYRUVATE, PHOSPHATE DIKINASE REGULATORY PROTEIN 1, CHLOROPLASTIC"/>
    <property type="match status" value="1"/>
</dbReference>
<dbReference type="Pfam" id="PF03618">
    <property type="entry name" value="Kinase-PPPase"/>
    <property type="match status" value="1"/>
</dbReference>
<reference key="1">
    <citation type="journal article" date="2009" name="Genome Biol.">
        <title>Genomic and genetic analyses of diversity and plant interactions of Pseudomonas fluorescens.</title>
        <authorList>
            <person name="Silby M.W."/>
            <person name="Cerdeno-Tarraga A.M."/>
            <person name="Vernikos G.S."/>
            <person name="Giddens S.R."/>
            <person name="Jackson R.W."/>
            <person name="Preston G.M."/>
            <person name="Zhang X.-X."/>
            <person name="Moon C.D."/>
            <person name="Gehrig S.M."/>
            <person name="Godfrey S.A.C."/>
            <person name="Knight C.G."/>
            <person name="Malone J.G."/>
            <person name="Robinson Z."/>
            <person name="Spiers A.J."/>
            <person name="Harris S."/>
            <person name="Challis G.L."/>
            <person name="Yaxley A.M."/>
            <person name="Harris D."/>
            <person name="Seeger K."/>
            <person name="Murphy L."/>
            <person name="Rutter S."/>
            <person name="Squares R."/>
            <person name="Quail M.A."/>
            <person name="Saunders E."/>
            <person name="Mavromatis K."/>
            <person name="Brettin T.S."/>
            <person name="Bentley S.D."/>
            <person name="Hothersall J."/>
            <person name="Stephens E."/>
            <person name="Thomas C.M."/>
            <person name="Parkhill J."/>
            <person name="Levy S.B."/>
            <person name="Rainey P.B."/>
            <person name="Thomson N.R."/>
        </authorList>
    </citation>
    <scope>NUCLEOTIDE SEQUENCE [LARGE SCALE GENOMIC DNA]</scope>
    <source>
        <strain>SBW25</strain>
    </source>
</reference>